<dbReference type="EMBL" id="Y00067">
    <property type="protein sequence ID" value="CAA68276.1"/>
    <property type="molecule type" value="Genomic_DNA"/>
</dbReference>
<dbReference type="EMBL" id="EF560736">
    <property type="protein sequence ID" value="ABQ59046.1"/>
    <property type="molecule type" value="mRNA"/>
</dbReference>
<dbReference type="EMBL" id="AK294681">
    <property type="protein sequence ID" value="BAG57843.1"/>
    <property type="molecule type" value="mRNA"/>
</dbReference>
<dbReference type="EMBL" id="AF106564">
    <property type="status" value="NOT_ANNOTATED_CDS"/>
    <property type="molecule type" value="Genomic_DNA"/>
</dbReference>
<dbReference type="EMBL" id="CH471080">
    <property type="protein sequence ID" value="EAW63602.1"/>
    <property type="molecule type" value="Genomic_DNA"/>
</dbReference>
<dbReference type="EMBL" id="BC096757">
    <property type="protein sequence ID" value="AAH96757.1"/>
    <property type="molecule type" value="mRNA"/>
</dbReference>
<dbReference type="CCDS" id="CCDS47831.1">
    <molecule id="P07197-2"/>
</dbReference>
<dbReference type="CCDS" id="CCDS6046.1">
    <molecule id="P07197-1"/>
</dbReference>
<dbReference type="PIR" id="A27864">
    <property type="entry name" value="A27864"/>
</dbReference>
<dbReference type="RefSeq" id="NP_001099011.1">
    <molecule id="P07197-2"/>
    <property type="nucleotide sequence ID" value="NM_001105541.2"/>
</dbReference>
<dbReference type="RefSeq" id="NP_005373.2">
    <molecule id="P07197-1"/>
    <property type="nucleotide sequence ID" value="NM_005382.2"/>
</dbReference>
<dbReference type="SMR" id="P07197"/>
<dbReference type="BioGRID" id="110818">
    <property type="interactions" value="176"/>
</dbReference>
<dbReference type="FunCoup" id="P07197">
    <property type="interactions" value="321"/>
</dbReference>
<dbReference type="IntAct" id="P07197">
    <property type="interactions" value="93"/>
</dbReference>
<dbReference type="MINT" id="P07197"/>
<dbReference type="STRING" id="9606.ENSP00000221166"/>
<dbReference type="GlyCosmos" id="P07197">
    <property type="glycosylation" value="7 sites, 1 glycan"/>
</dbReference>
<dbReference type="GlyGen" id="P07197">
    <property type="glycosylation" value="8 sites, 1 O-linked glycan (7 sites)"/>
</dbReference>
<dbReference type="iPTMnet" id="P07197"/>
<dbReference type="PhosphoSitePlus" id="P07197"/>
<dbReference type="SwissPalm" id="P07197"/>
<dbReference type="BioMuta" id="NEFM"/>
<dbReference type="DMDM" id="281185500"/>
<dbReference type="jPOST" id="P07197"/>
<dbReference type="MassIVE" id="P07197"/>
<dbReference type="PaxDb" id="9606-ENSP00000221166"/>
<dbReference type="PeptideAtlas" id="P07197"/>
<dbReference type="ProteomicsDB" id="19213"/>
<dbReference type="ProteomicsDB" id="51962">
    <molecule id="P07197-1"/>
</dbReference>
<dbReference type="Pumba" id="P07197"/>
<dbReference type="Antibodypedia" id="4396">
    <property type="antibodies" value="715 antibodies from 49 providers"/>
</dbReference>
<dbReference type="DNASU" id="4741"/>
<dbReference type="Ensembl" id="ENST00000221166.10">
    <molecule id="P07197-1"/>
    <property type="protein sequence ID" value="ENSP00000221166.5"/>
    <property type="gene ID" value="ENSG00000104722.14"/>
</dbReference>
<dbReference type="Ensembl" id="ENST00000433454.3">
    <molecule id="P07197-2"/>
    <property type="protein sequence ID" value="ENSP00000412295.2"/>
    <property type="gene ID" value="ENSG00000104722.14"/>
</dbReference>
<dbReference type="GeneID" id="4741"/>
<dbReference type="KEGG" id="hsa:4741"/>
<dbReference type="MANE-Select" id="ENST00000221166.10">
    <property type="protein sequence ID" value="ENSP00000221166.5"/>
    <property type="RefSeq nucleotide sequence ID" value="NM_005382.2"/>
    <property type="RefSeq protein sequence ID" value="NP_005373.2"/>
</dbReference>
<dbReference type="UCSC" id="uc003xed.5">
    <molecule id="P07197-1"/>
    <property type="organism name" value="human"/>
</dbReference>
<dbReference type="AGR" id="HGNC:7734"/>
<dbReference type="CTD" id="4741"/>
<dbReference type="DisGeNET" id="4741"/>
<dbReference type="GeneCards" id="NEFM"/>
<dbReference type="HGNC" id="HGNC:7734">
    <property type="gene designation" value="NEFM"/>
</dbReference>
<dbReference type="HPA" id="ENSG00000104722">
    <property type="expression patterns" value="Group enriched (brain, retina)"/>
</dbReference>
<dbReference type="MIM" id="162250">
    <property type="type" value="gene"/>
</dbReference>
<dbReference type="neXtProt" id="NX_P07197"/>
<dbReference type="OpenTargets" id="ENSG00000104722"/>
<dbReference type="PharmGKB" id="PA162397442"/>
<dbReference type="VEuPathDB" id="HostDB:ENSG00000104722"/>
<dbReference type="eggNOG" id="KOG1216">
    <property type="taxonomic scope" value="Eukaryota"/>
</dbReference>
<dbReference type="GeneTree" id="ENSGT00940000154418"/>
<dbReference type="HOGENOM" id="CLU_524743_0_0_1"/>
<dbReference type="InParanoid" id="P07197"/>
<dbReference type="OMA" id="TTYQDTI"/>
<dbReference type="OrthoDB" id="2441647at2759"/>
<dbReference type="PAN-GO" id="P07197">
    <property type="GO annotations" value="6 GO annotations based on evolutionary models"/>
</dbReference>
<dbReference type="PhylomeDB" id="P07197"/>
<dbReference type="TreeFam" id="TF330122"/>
<dbReference type="PathwayCommons" id="P07197"/>
<dbReference type="SignaLink" id="P07197"/>
<dbReference type="SIGNOR" id="P07197"/>
<dbReference type="BioGRID-ORCS" id="4741">
    <property type="hits" value="32 hits in 1148 CRISPR screens"/>
</dbReference>
<dbReference type="CD-CODE" id="FB4E32DD">
    <property type="entry name" value="Presynaptic clusters and postsynaptic densities"/>
</dbReference>
<dbReference type="ChiTaRS" id="NEFM">
    <property type="organism name" value="human"/>
</dbReference>
<dbReference type="GeneWiki" id="NEFM"/>
<dbReference type="GenomeRNAi" id="4741"/>
<dbReference type="Pharos" id="P07197">
    <property type="development level" value="Tbio"/>
</dbReference>
<dbReference type="PRO" id="PR:P07197"/>
<dbReference type="Proteomes" id="UP000005640">
    <property type="component" value="Chromosome 8"/>
</dbReference>
<dbReference type="RNAct" id="P07197">
    <property type="molecule type" value="protein"/>
</dbReference>
<dbReference type="Bgee" id="ENSG00000104722">
    <property type="expression patterns" value="Expressed in dorsal root ganglion and 148 other cell types or tissues"/>
</dbReference>
<dbReference type="ExpressionAtlas" id="P07197">
    <property type="expression patterns" value="baseline and differential"/>
</dbReference>
<dbReference type="GO" id="GO:0030424">
    <property type="term" value="C:axon"/>
    <property type="evidence" value="ECO:0000318"/>
    <property type="project" value="GO_Central"/>
</dbReference>
<dbReference type="GO" id="GO:0005882">
    <property type="term" value="C:intermediate filament"/>
    <property type="evidence" value="ECO:0000318"/>
    <property type="project" value="GO_Central"/>
</dbReference>
<dbReference type="GO" id="GO:0045111">
    <property type="term" value="C:intermediate filament cytoskeleton"/>
    <property type="evidence" value="ECO:0000314"/>
    <property type="project" value="HPA"/>
</dbReference>
<dbReference type="GO" id="GO:0097418">
    <property type="term" value="C:neurofibrillary tangle"/>
    <property type="evidence" value="ECO:0000314"/>
    <property type="project" value="BHF-UCL"/>
</dbReference>
<dbReference type="GO" id="GO:0005883">
    <property type="term" value="C:neurofilament"/>
    <property type="evidence" value="ECO:0000304"/>
    <property type="project" value="ProtInc"/>
</dbReference>
<dbReference type="GO" id="GO:0099160">
    <property type="term" value="C:postsynaptic intermediate filament cytoskeleton"/>
    <property type="evidence" value="ECO:0000318"/>
    <property type="project" value="GO_Central"/>
</dbReference>
<dbReference type="GO" id="GO:0008017">
    <property type="term" value="F:microtubule binding"/>
    <property type="evidence" value="ECO:0000304"/>
    <property type="project" value="BHF-UCL"/>
</dbReference>
<dbReference type="GO" id="GO:0005200">
    <property type="term" value="F:structural constituent of cytoskeleton"/>
    <property type="evidence" value="ECO:0000318"/>
    <property type="project" value="GO_Central"/>
</dbReference>
<dbReference type="GO" id="GO:0033693">
    <property type="term" value="P:neurofilament bundle assembly"/>
    <property type="evidence" value="ECO:0000318"/>
    <property type="project" value="GO_Central"/>
</dbReference>
<dbReference type="FunFam" id="1.20.5.1160:FF:000001">
    <property type="entry name" value="Keratin type II"/>
    <property type="match status" value="1"/>
</dbReference>
<dbReference type="FunFam" id="1.20.5.170:FF:000002">
    <property type="entry name" value="Type I keratin KA11"/>
    <property type="match status" value="1"/>
</dbReference>
<dbReference type="FunFam" id="1.20.5.500:FF:000001">
    <property type="entry name" value="Type II keratin 23"/>
    <property type="match status" value="1"/>
</dbReference>
<dbReference type="Gene3D" id="1.20.5.170">
    <property type="match status" value="1"/>
</dbReference>
<dbReference type="Gene3D" id="1.20.5.500">
    <property type="entry name" value="Single helix bin"/>
    <property type="match status" value="1"/>
</dbReference>
<dbReference type="Gene3D" id="1.20.5.1160">
    <property type="entry name" value="Vasodilator-stimulated phosphoprotein"/>
    <property type="match status" value="1"/>
</dbReference>
<dbReference type="InterPro" id="IPR018039">
    <property type="entry name" value="IF_conserved"/>
</dbReference>
<dbReference type="InterPro" id="IPR039008">
    <property type="entry name" value="IF_rod_dom"/>
</dbReference>
<dbReference type="InterPro" id="IPR006821">
    <property type="entry name" value="Intermed_filament_DNA-bd"/>
</dbReference>
<dbReference type="InterPro" id="IPR050405">
    <property type="entry name" value="Intermediate_filament"/>
</dbReference>
<dbReference type="InterPro" id="IPR002957">
    <property type="entry name" value="Keratin_I"/>
</dbReference>
<dbReference type="PANTHER" id="PTHR45652">
    <property type="entry name" value="GLIAL FIBRILLARY ACIDIC PROTEIN"/>
    <property type="match status" value="1"/>
</dbReference>
<dbReference type="PANTHER" id="PTHR45652:SF3">
    <property type="entry name" value="NEUROFILAMENT MEDIUM POLYPEPTIDE"/>
    <property type="match status" value="1"/>
</dbReference>
<dbReference type="Pfam" id="PF00038">
    <property type="entry name" value="Filament"/>
    <property type="match status" value="1"/>
</dbReference>
<dbReference type="Pfam" id="PF04732">
    <property type="entry name" value="Filament_head"/>
    <property type="match status" value="1"/>
</dbReference>
<dbReference type="PRINTS" id="PR01248">
    <property type="entry name" value="TYPE1KERATIN"/>
</dbReference>
<dbReference type="SMART" id="SM01391">
    <property type="entry name" value="Filament"/>
    <property type="match status" value="1"/>
</dbReference>
<dbReference type="SUPFAM" id="SSF64593">
    <property type="entry name" value="Intermediate filament protein, coiled coil region"/>
    <property type="match status" value="2"/>
</dbReference>
<dbReference type="PROSITE" id="PS00226">
    <property type="entry name" value="IF_ROD_1"/>
    <property type="match status" value="1"/>
</dbReference>
<dbReference type="PROSITE" id="PS51842">
    <property type="entry name" value="IF_ROD_2"/>
    <property type="match status" value="1"/>
</dbReference>
<name>NFM_HUMAN</name>
<evidence type="ECO:0000250" key="1"/>
<evidence type="ECO:0000250" key="2">
    <source>
        <dbReference type="UniProtKB" id="O77788"/>
    </source>
</evidence>
<evidence type="ECO:0000250" key="3">
    <source>
        <dbReference type="UniProtKB" id="P08553"/>
    </source>
</evidence>
<evidence type="ECO:0000250" key="4">
    <source>
        <dbReference type="UniProtKB" id="P12839"/>
    </source>
</evidence>
<evidence type="ECO:0000255" key="5">
    <source>
        <dbReference type="PROSITE-ProRule" id="PRU01188"/>
    </source>
</evidence>
<evidence type="ECO:0000256" key="6">
    <source>
        <dbReference type="SAM" id="MobiDB-lite"/>
    </source>
</evidence>
<evidence type="ECO:0000269" key="7">
    <source>
    </source>
</evidence>
<evidence type="ECO:0000269" key="8">
    <source>
    </source>
</evidence>
<evidence type="ECO:0000269" key="9">
    <source>
    </source>
</evidence>
<evidence type="ECO:0000269" key="10">
    <source>
    </source>
</evidence>
<evidence type="ECO:0000269" key="11">
    <source ref="5"/>
</evidence>
<evidence type="ECO:0000303" key="12">
    <source>
    </source>
</evidence>
<evidence type="ECO:0000305" key="13"/>
<evidence type="ECO:0007744" key="14">
    <source>
    </source>
</evidence>
<evidence type="ECO:0007744" key="15">
    <source>
    </source>
</evidence>
<organism>
    <name type="scientific">Homo sapiens</name>
    <name type="common">Human</name>
    <dbReference type="NCBI Taxonomy" id="9606"/>
    <lineage>
        <taxon>Eukaryota</taxon>
        <taxon>Metazoa</taxon>
        <taxon>Chordata</taxon>
        <taxon>Craniata</taxon>
        <taxon>Vertebrata</taxon>
        <taxon>Euteleostomi</taxon>
        <taxon>Mammalia</taxon>
        <taxon>Eutheria</taxon>
        <taxon>Euarchontoglires</taxon>
        <taxon>Primates</taxon>
        <taxon>Haplorrhini</taxon>
        <taxon>Catarrhini</taxon>
        <taxon>Hominidae</taxon>
        <taxon>Homo</taxon>
    </lineage>
</organism>
<reference key="1">
    <citation type="journal article" date="1987" name="EMBO J.">
        <title>The human mid-size neurofilament subunit: a repeated protein sequence and the relationship of its gene to the intermediate filament gene family.</title>
        <authorList>
            <person name="Myers M.W."/>
            <person name="Lazzarini R.A."/>
            <person name="Lee V.M.-Y."/>
            <person name="Schlaepfer W.W."/>
            <person name="Nelson D.L."/>
        </authorList>
    </citation>
    <scope>NUCLEOTIDE SEQUENCE [GENOMIC DNA]</scope>
    <scope>VARIANT THR-439</scope>
</reference>
<reference key="2">
    <citation type="journal article" date="2001" name="Genome Res.">
        <title>Towards a catalog of human genes and proteins: sequencing and analysis of 500 novel complete protein coding human cDNAs.</title>
        <authorList>
            <person name="Wiemann S."/>
            <person name="Weil B."/>
            <person name="Wellenreuther R."/>
            <person name="Gassenhuber J."/>
            <person name="Glassl S."/>
            <person name="Ansorge W."/>
            <person name="Boecher M."/>
            <person name="Bloecker H."/>
            <person name="Bauersachs S."/>
            <person name="Blum H."/>
            <person name="Lauber J."/>
            <person name="Duesterhoeft A."/>
            <person name="Beyer A."/>
            <person name="Koehrer K."/>
            <person name="Strack N."/>
            <person name="Mewes H.-W."/>
            <person name="Ottenwaelder B."/>
            <person name="Obermaier B."/>
            <person name="Tampe J."/>
            <person name="Heubner D."/>
            <person name="Wambutt R."/>
            <person name="Korn B."/>
            <person name="Klein M."/>
            <person name="Poustka A."/>
        </authorList>
    </citation>
    <scope>NUCLEOTIDE SEQUENCE [LARGE SCALE MRNA] (ISOFORM 1)</scope>
    <scope>VARIANT THR-439</scope>
    <source>
        <tissue>Retina</tissue>
    </source>
</reference>
<reference key="3">
    <citation type="journal article" date="2004" name="Nat. Genet.">
        <title>Complete sequencing and characterization of 21,243 full-length human cDNAs.</title>
        <authorList>
            <person name="Ota T."/>
            <person name="Suzuki Y."/>
            <person name="Nishikawa T."/>
            <person name="Otsuki T."/>
            <person name="Sugiyama T."/>
            <person name="Irie R."/>
            <person name="Wakamatsu A."/>
            <person name="Hayashi K."/>
            <person name="Sato H."/>
            <person name="Nagai K."/>
            <person name="Kimura K."/>
            <person name="Makita H."/>
            <person name="Sekine M."/>
            <person name="Obayashi M."/>
            <person name="Nishi T."/>
            <person name="Shibahara T."/>
            <person name="Tanaka T."/>
            <person name="Ishii S."/>
            <person name="Yamamoto J."/>
            <person name="Saito K."/>
            <person name="Kawai Y."/>
            <person name="Isono Y."/>
            <person name="Nakamura Y."/>
            <person name="Nagahari K."/>
            <person name="Murakami K."/>
            <person name="Yasuda T."/>
            <person name="Iwayanagi T."/>
            <person name="Wagatsuma M."/>
            <person name="Shiratori A."/>
            <person name="Sudo H."/>
            <person name="Hosoiri T."/>
            <person name="Kaku Y."/>
            <person name="Kodaira H."/>
            <person name="Kondo H."/>
            <person name="Sugawara M."/>
            <person name="Takahashi M."/>
            <person name="Kanda K."/>
            <person name="Yokoi T."/>
            <person name="Furuya T."/>
            <person name="Kikkawa E."/>
            <person name="Omura Y."/>
            <person name="Abe K."/>
            <person name="Kamihara K."/>
            <person name="Katsuta N."/>
            <person name="Sato K."/>
            <person name="Tanikawa M."/>
            <person name="Yamazaki M."/>
            <person name="Ninomiya K."/>
            <person name="Ishibashi T."/>
            <person name="Yamashita H."/>
            <person name="Murakawa K."/>
            <person name="Fujimori K."/>
            <person name="Tanai H."/>
            <person name="Kimata M."/>
            <person name="Watanabe M."/>
            <person name="Hiraoka S."/>
            <person name="Chiba Y."/>
            <person name="Ishida S."/>
            <person name="Ono Y."/>
            <person name="Takiguchi S."/>
            <person name="Watanabe S."/>
            <person name="Yosida M."/>
            <person name="Hotuta T."/>
            <person name="Kusano J."/>
            <person name="Kanehori K."/>
            <person name="Takahashi-Fujii A."/>
            <person name="Hara H."/>
            <person name="Tanase T.-O."/>
            <person name="Nomura Y."/>
            <person name="Togiya S."/>
            <person name="Komai F."/>
            <person name="Hara R."/>
            <person name="Takeuchi K."/>
            <person name="Arita M."/>
            <person name="Imose N."/>
            <person name="Musashino K."/>
            <person name="Yuuki H."/>
            <person name="Oshima A."/>
            <person name="Sasaki N."/>
            <person name="Aotsuka S."/>
            <person name="Yoshikawa Y."/>
            <person name="Matsunawa H."/>
            <person name="Ichihara T."/>
            <person name="Shiohata N."/>
            <person name="Sano S."/>
            <person name="Moriya S."/>
            <person name="Momiyama H."/>
            <person name="Satoh N."/>
            <person name="Takami S."/>
            <person name="Terashima Y."/>
            <person name="Suzuki O."/>
            <person name="Nakagawa S."/>
            <person name="Senoh A."/>
            <person name="Mizoguchi H."/>
            <person name="Goto Y."/>
            <person name="Shimizu F."/>
            <person name="Wakebe H."/>
            <person name="Hishigaki H."/>
            <person name="Watanabe T."/>
            <person name="Sugiyama A."/>
            <person name="Takemoto M."/>
            <person name="Kawakami B."/>
            <person name="Yamazaki M."/>
            <person name="Watanabe K."/>
            <person name="Kumagai A."/>
            <person name="Itakura S."/>
            <person name="Fukuzumi Y."/>
            <person name="Fujimori Y."/>
            <person name="Komiyama M."/>
            <person name="Tashiro H."/>
            <person name="Tanigami A."/>
            <person name="Fujiwara T."/>
            <person name="Ono T."/>
            <person name="Yamada K."/>
            <person name="Fujii Y."/>
            <person name="Ozaki K."/>
            <person name="Hirao M."/>
            <person name="Ohmori Y."/>
            <person name="Kawabata A."/>
            <person name="Hikiji T."/>
            <person name="Kobatake N."/>
            <person name="Inagaki H."/>
            <person name="Ikema Y."/>
            <person name="Okamoto S."/>
            <person name="Okitani R."/>
            <person name="Kawakami T."/>
            <person name="Noguchi S."/>
            <person name="Itoh T."/>
            <person name="Shigeta K."/>
            <person name="Senba T."/>
            <person name="Matsumura K."/>
            <person name="Nakajima Y."/>
            <person name="Mizuno T."/>
            <person name="Morinaga M."/>
            <person name="Sasaki M."/>
            <person name="Togashi T."/>
            <person name="Oyama M."/>
            <person name="Hata H."/>
            <person name="Watanabe M."/>
            <person name="Komatsu T."/>
            <person name="Mizushima-Sugano J."/>
            <person name="Satoh T."/>
            <person name="Shirai Y."/>
            <person name="Takahashi Y."/>
            <person name="Nakagawa K."/>
            <person name="Okumura K."/>
            <person name="Nagase T."/>
            <person name="Nomura N."/>
            <person name="Kikuchi H."/>
            <person name="Masuho Y."/>
            <person name="Yamashita R."/>
            <person name="Nakai K."/>
            <person name="Yada T."/>
            <person name="Nakamura Y."/>
            <person name="Ohara O."/>
            <person name="Isogai T."/>
            <person name="Sugano S."/>
        </authorList>
    </citation>
    <scope>NUCLEOTIDE SEQUENCE [LARGE SCALE MRNA] (ISOFORM 2)</scope>
    <scope>VARIANT THR-439</scope>
    <source>
        <tissue>Brain</tissue>
    </source>
</reference>
<reference key="4">
    <citation type="journal article" date="2006" name="Nature">
        <title>DNA sequence and analysis of human chromosome 8.</title>
        <authorList>
            <person name="Nusbaum C."/>
            <person name="Mikkelsen T.S."/>
            <person name="Zody M.C."/>
            <person name="Asakawa S."/>
            <person name="Taudien S."/>
            <person name="Garber M."/>
            <person name="Kodira C.D."/>
            <person name="Schueler M.G."/>
            <person name="Shimizu A."/>
            <person name="Whittaker C.A."/>
            <person name="Chang J.L."/>
            <person name="Cuomo C.A."/>
            <person name="Dewar K."/>
            <person name="FitzGerald M.G."/>
            <person name="Yang X."/>
            <person name="Allen N.R."/>
            <person name="Anderson S."/>
            <person name="Asakawa T."/>
            <person name="Blechschmidt K."/>
            <person name="Bloom T."/>
            <person name="Borowsky M.L."/>
            <person name="Butler J."/>
            <person name="Cook A."/>
            <person name="Corum B."/>
            <person name="DeArellano K."/>
            <person name="DeCaprio D."/>
            <person name="Dooley K.T."/>
            <person name="Dorris L. III"/>
            <person name="Engels R."/>
            <person name="Gloeckner G."/>
            <person name="Hafez N."/>
            <person name="Hagopian D.S."/>
            <person name="Hall J.L."/>
            <person name="Ishikawa S.K."/>
            <person name="Jaffe D.B."/>
            <person name="Kamat A."/>
            <person name="Kudoh J."/>
            <person name="Lehmann R."/>
            <person name="Lokitsang T."/>
            <person name="Macdonald P."/>
            <person name="Major J.E."/>
            <person name="Matthews C.D."/>
            <person name="Mauceli E."/>
            <person name="Menzel U."/>
            <person name="Mihalev A.H."/>
            <person name="Minoshima S."/>
            <person name="Murayama Y."/>
            <person name="Naylor J.W."/>
            <person name="Nicol R."/>
            <person name="Nguyen C."/>
            <person name="O'Leary S.B."/>
            <person name="O'Neill K."/>
            <person name="Parker S.C.J."/>
            <person name="Polley A."/>
            <person name="Raymond C.K."/>
            <person name="Reichwald K."/>
            <person name="Rodriguez J."/>
            <person name="Sasaki T."/>
            <person name="Schilhabel M."/>
            <person name="Siddiqui R."/>
            <person name="Smith C.L."/>
            <person name="Sneddon T.P."/>
            <person name="Talamas J.A."/>
            <person name="Tenzin P."/>
            <person name="Topham K."/>
            <person name="Venkataraman V."/>
            <person name="Wen G."/>
            <person name="Yamazaki S."/>
            <person name="Young S.K."/>
            <person name="Zeng Q."/>
            <person name="Zimmer A.R."/>
            <person name="Rosenthal A."/>
            <person name="Birren B.W."/>
            <person name="Platzer M."/>
            <person name="Shimizu N."/>
            <person name="Lander E.S."/>
        </authorList>
    </citation>
    <scope>NUCLEOTIDE SEQUENCE [LARGE SCALE GENOMIC DNA]</scope>
</reference>
<reference key="5">
    <citation type="submission" date="2005-09" db="EMBL/GenBank/DDBJ databases">
        <authorList>
            <person name="Mural R.J."/>
            <person name="Istrail S."/>
            <person name="Sutton G.G."/>
            <person name="Florea L."/>
            <person name="Halpern A.L."/>
            <person name="Mobarry C.M."/>
            <person name="Lippert R."/>
            <person name="Walenz B."/>
            <person name="Shatkay H."/>
            <person name="Dew I."/>
            <person name="Miller J.R."/>
            <person name="Flanigan M.J."/>
            <person name="Edwards N.J."/>
            <person name="Bolanos R."/>
            <person name="Fasulo D."/>
            <person name="Halldorsson B.V."/>
            <person name="Hannenhalli S."/>
            <person name="Turner R."/>
            <person name="Yooseph S."/>
            <person name="Lu F."/>
            <person name="Nusskern D.R."/>
            <person name="Shue B.C."/>
            <person name="Zheng X.H."/>
            <person name="Zhong F."/>
            <person name="Delcher A.L."/>
            <person name="Huson D.H."/>
            <person name="Kravitz S.A."/>
            <person name="Mouchard L."/>
            <person name="Reinert K."/>
            <person name="Remington K.A."/>
            <person name="Clark A.G."/>
            <person name="Waterman M.S."/>
            <person name="Eichler E.E."/>
            <person name="Adams M.D."/>
            <person name="Hunkapiller M.W."/>
            <person name="Myers E.W."/>
            <person name="Venter J.C."/>
        </authorList>
    </citation>
    <scope>NUCLEOTIDE SEQUENCE [LARGE SCALE GENOMIC DNA]</scope>
    <scope>VARIANT THR-439</scope>
</reference>
<reference key="6">
    <citation type="journal article" date="2004" name="Genome Res.">
        <title>The status, quality, and expansion of the NIH full-length cDNA project: the Mammalian Gene Collection (MGC).</title>
        <authorList>
            <consortium name="The MGC Project Team"/>
        </authorList>
    </citation>
    <scope>NUCLEOTIDE SEQUENCE [LARGE SCALE MRNA] (ISOFORM 1)</scope>
    <scope>VARIANT THR-439</scope>
    <source>
        <tissue>Brain</tissue>
    </source>
</reference>
<reference key="7">
    <citation type="journal article" date="1988" name="Proc. Natl. Acad. Sci. U.S.A.">
        <title>Identification of the major multiphosphorylation site in mammalian neurofilaments.</title>
        <authorList>
            <person name="Lee V.M.-Y."/>
            <person name="Otvos L. Jr."/>
            <person name="Carden M.J."/>
            <person name="Hollosi M."/>
            <person name="Dietzschold B."/>
            <person name="Lazzarini R.A."/>
        </authorList>
    </citation>
    <scope>PARTIAL PROTEIN SEQUENCE</scope>
</reference>
<reference key="8">
    <citation type="submission" date="2008-12" db="UniProtKB">
        <authorList>
            <person name="Lubec G."/>
            <person name="Chen W.-Q."/>
            <person name="Sun Y."/>
        </authorList>
    </citation>
    <scope>PROTEIN SEQUENCE OF 128-137; 140-155; 169-184 AND 592-606</scope>
    <scope>IDENTIFICATION BY MASS SPECTROMETRY</scope>
    <source>
        <tissue>Fetal brain cortex</tissue>
    </source>
</reference>
<reference key="9">
    <citation type="journal article" date="1996" name="J. Biol. Chem.">
        <title>PKN associates and phosphorylates the head-rod domain of neurofilament protein.</title>
        <authorList>
            <person name="Mukai H."/>
            <person name="Toshimori M."/>
            <person name="Shibata H."/>
            <person name="Kitagawa M."/>
            <person name="Shimakawa M."/>
            <person name="Miyahara M."/>
            <person name="Sunakawa H."/>
            <person name="Ono Y."/>
        </authorList>
    </citation>
    <scope>PHOSPHORYLATION BY PKN1</scope>
</reference>
<reference key="10">
    <citation type="journal article" date="2011" name="Sci. Signal.">
        <title>System-wide temporal characterization of the proteome and phosphoproteome of human embryonic stem cell differentiation.</title>
        <authorList>
            <person name="Rigbolt K.T."/>
            <person name="Prokhorova T.A."/>
            <person name="Akimov V."/>
            <person name="Henningsen J."/>
            <person name="Johansen P.T."/>
            <person name="Kratchmarova I."/>
            <person name="Kassem M."/>
            <person name="Mann M."/>
            <person name="Olsen J.V."/>
            <person name="Blagoev B."/>
        </authorList>
    </citation>
    <scope>PHOSPHORYLATION [LARGE SCALE ANALYSIS] AT SER-837</scope>
    <scope>IDENTIFICATION BY MASS SPECTROMETRY [LARGE SCALE ANALYSIS]</scope>
</reference>
<reference key="11">
    <citation type="journal article" date="2011" name="BMC Syst. Biol.">
        <title>Initial characterization of the human central proteome.</title>
        <authorList>
            <person name="Burkard T.R."/>
            <person name="Planyavsky M."/>
            <person name="Kaupe I."/>
            <person name="Breitwieser F.P."/>
            <person name="Buerckstuemmer T."/>
            <person name="Bennett K.L."/>
            <person name="Superti-Furga G."/>
            <person name="Colinge J."/>
        </authorList>
    </citation>
    <scope>VARIANT [LARGE SCALE ANALYSIS] THR-439</scope>
    <scope>IDENTIFICATION BY MASS SPECTROMETRY [LARGE SCALE ANALYSIS]</scope>
</reference>
<keyword id="KW-0007">Acetylation</keyword>
<keyword id="KW-0025">Alternative splicing</keyword>
<keyword id="KW-0966">Cell projection</keyword>
<keyword id="KW-0175">Coiled coil</keyword>
<keyword id="KW-0963">Cytoplasm</keyword>
<keyword id="KW-0206">Cytoskeleton</keyword>
<keyword id="KW-0903">Direct protein sequencing</keyword>
<keyword id="KW-0325">Glycoprotein</keyword>
<keyword id="KW-0403">Intermediate filament</keyword>
<keyword id="KW-0488">Methylation</keyword>
<keyword id="KW-0597">Phosphoprotein</keyword>
<keyword id="KW-1267">Proteomics identification</keyword>
<keyword id="KW-1185">Reference proteome</keyword>
<keyword id="KW-0677">Repeat</keyword>
<accession>P07197</accession>
<accession>B4DGN2</accession>
<accession>E9PBF7</accession>
<accession>Q4QRK6</accession>
<sequence>MSYTLDSLGNPSAYRRVTETRSSFSRVSGSPSSGFRSQSWSRGSPSTVSSSYKRSMLAPRLAYSSAMLSSAESSLDFSQSSSLLNGGSGPGGDYKLSRSNEKEQLQGLNDRFAGYIEKVHYLEQQNKEIEAEIQALRQKQASHAQLGDAYDQEIRELRATLEMVNHEKAQVQLDSDHLEEDIHRLKERFEEEARLRDDTEAAIRALRKDIEEASLVKVELDKKVQSLQDEVAFLRSNHEEEVADLLAQIQASHITVERKDYLKTDISTALKEIRSQLESHSDQNMHQAEEWFKCRYAKLTEAAEQNKEAIRSAKEEIAEYRRQLQSKSIELESVRGTKESLERQLSDIEERHNHDLSSYQDTIQQLENELRGTKWEMARHLREYQDLLNVKMALDIEIAAYRKLLEGEETRFSTFAGSITGPLYTHRPPITISSKIQKPKVEAPKLKVQHKFVEEIIEETKVEDEKSEMEEALTAITEELAVSMKEEKKEAAEEKEEEPEAEEEEVAAKKSPVKATAPEVKEEEGEKEEEEGQEEEEEEDEGAKSDQAEEGGSEKEGSSEKEEGEQEEGETEAEAEGEEAEAKEEKKVEEKSEEVATKEELVADAKVEKPEKAKSPVPKSPVEEKGKSPVPKSPVEEKGKSPVPKSPVEEKGKSPVPKSPVEEKGKSPVSKSPVEEKAKSPVPKSPVEEAKSKAEVGKGEQKEEEEKEVKEAPKEEKVEKKEEKPKDVPEKKKAESPVKEEAVAEVVTITKSVKVHLEKETKEEGKPLQQEKEKEKAGGEGGSEEEGSDKGAKGSRKEDIAVNGEVEGKEEVEQETKEKGSGREEEKGVVTNGLDLSPADEKKGGDKSEEKVVVTKTVEKITSEGGDGATKYITKSVTVTQKVEEHEETFEEKLVSTKKVEKVTSHAIVKEVTQSD</sequence>
<protein>
    <recommendedName>
        <fullName>Neurofilament medium polypeptide</fullName>
        <shortName>NF-M</shortName>
    </recommendedName>
    <alternativeName>
        <fullName>160 kDa neurofilament protein</fullName>
    </alternativeName>
    <alternativeName>
        <fullName>Neurofilament 3</fullName>
    </alternativeName>
    <alternativeName>
        <fullName>Neurofilament triplet M protein</fullName>
    </alternativeName>
</protein>
<feature type="initiator methionine" description="Removed" evidence="2">
    <location>
        <position position="1"/>
    </location>
</feature>
<feature type="chain" id="PRO_0000063794" description="Neurofilament medium polypeptide">
    <location>
        <begin position="2"/>
        <end position="916"/>
    </location>
</feature>
<feature type="domain" description="IF rod" evidence="5">
    <location>
        <begin position="101"/>
        <end position="412"/>
    </location>
</feature>
<feature type="repeat" description="1">
    <location>
        <begin position="614"/>
        <end position="626"/>
    </location>
</feature>
<feature type="repeat" description="2">
    <location>
        <begin position="627"/>
        <end position="639"/>
    </location>
</feature>
<feature type="repeat" description="3">
    <location>
        <begin position="640"/>
        <end position="652"/>
    </location>
</feature>
<feature type="repeat" description="4">
    <location>
        <begin position="653"/>
        <end position="665"/>
    </location>
</feature>
<feature type="repeat" description="5">
    <location>
        <begin position="666"/>
        <end position="678"/>
    </location>
</feature>
<feature type="repeat" description="6">
    <location>
        <begin position="679"/>
        <end position="691"/>
    </location>
</feature>
<feature type="region of interest" description="Disordered" evidence="6">
    <location>
        <begin position="1"/>
        <end position="51"/>
    </location>
</feature>
<feature type="region of interest" description="Head">
    <location>
        <begin position="2"/>
        <end position="104"/>
    </location>
</feature>
<feature type="region of interest" description="Coil 1A">
    <location>
        <begin position="105"/>
        <end position="136"/>
    </location>
</feature>
<feature type="region of interest" description="Linker 1">
    <location>
        <begin position="137"/>
        <end position="149"/>
    </location>
</feature>
<feature type="region of interest" description="Coil 1B">
    <location>
        <begin position="150"/>
        <end position="248"/>
    </location>
</feature>
<feature type="region of interest" description="Linker 12">
    <location>
        <begin position="249"/>
        <end position="265"/>
    </location>
</feature>
<feature type="region of interest" description="Coil 2A">
    <location>
        <begin position="266"/>
        <end position="287"/>
    </location>
</feature>
<feature type="region of interest" description="Linker 2">
    <location>
        <begin position="288"/>
        <end position="291"/>
    </location>
</feature>
<feature type="region of interest" description="Coil 2B">
    <location>
        <begin position="292"/>
        <end position="412"/>
    </location>
</feature>
<feature type="region of interest" description="Tail">
    <location>
        <begin position="413"/>
        <end position="916"/>
    </location>
</feature>
<feature type="region of interest" description="Disordered" evidence="6">
    <location>
        <begin position="485"/>
        <end position="851"/>
    </location>
</feature>
<feature type="region of interest" description="6 X 13 AA approximate tandem repeats of K-S-P-V-[PS]-K-S-P-V-E-E-[KA]-[GAK]">
    <location>
        <begin position="614"/>
        <end position="691"/>
    </location>
</feature>
<feature type="compositionally biased region" description="Polar residues" evidence="6">
    <location>
        <begin position="1"/>
        <end position="10"/>
    </location>
</feature>
<feature type="compositionally biased region" description="Low complexity" evidence="6">
    <location>
        <begin position="21"/>
        <end position="44"/>
    </location>
</feature>
<feature type="compositionally biased region" description="Acidic residues" evidence="6">
    <location>
        <begin position="493"/>
        <end position="505"/>
    </location>
</feature>
<feature type="compositionally biased region" description="Acidic residues" evidence="6">
    <location>
        <begin position="521"/>
        <end position="541"/>
    </location>
</feature>
<feature type="compositionally biased region" description="Basic and acidic residues" evidence="6">
    <location>
        <begin position="542"/>
        <end position="561"/>
    </location>
</feature>
<feature type="compositionally biased region" description="Acidic residues" evidence="6">
    <location>
        <begin position="562"/>
        <end position="582"/>
    </location>
</feature>
<feature type="compositionally biased region" description="Basic and acidic residues" evidence="6">
    <location>
        <begin position="583"/>
        <end position="614"/>
    </location>
</feature>
<feature type="compositionally biased region" description="Basic and acidic residues" evidence="6">
    <location>
        <begin position="686"/>
        <end position="701"/>
    </location>
</feature>
<feature type="compositionally biased region" description="Basic and acidic residues" evidence="6">
    <location>
        <begin position="707"/>
        <end position="742"/>
    </location>
</feature>
<feature type="compositionally biased region" description="Basic and acidic residues" evidence="6">
    <location>
        <begin position="755"/>
        <end position="778"/>
    </location>
</feature>
<feature type="compositionally biased region" description="Basic and acidic residues" evidence="6">
    <location>
        <begin position="788"/>
        <end position="828"/>
    </location>
</feature>
<feature type="compositionally biased region" description="Basic and acidic residues" evidence="6">
    <location>
        <begin position="839"/>
        <end position="851"/>
    </location>
</feature>
<feature type="modified residue" description="N-acetylserine" evidence="2">
    <location>
        <position position="2"/>
    </location>
</feature>
<feature type="modified residue" description="Phosphoserine" evidence="4">
    <location>
        <position position="30"/>
    </location>
</feature>
<feature type="modified residue" description="Omega-N-methylarginine" evidence="3">
    <location>
        <position position="42"/>
    </location>
</feature>
<feature type="modified residue" description="Phosphoserine" evidence="3">
    <location>
        <position position="99"/>
    </location>
</feature>
<feature type="modified residue" description="Phosphoserine" evidence="3">
    <location>
        <position position="226"/>
    </location>
</feature>
<feature type="modified residue" description="Phosphotyrosine" evidence="3">
    <location>
        <position position="320"/>
    </location>
</feature>
<feature type="modified residue" description="Phosphoserine" evidence="4">
    <location>
        <position position="346"/>
    </location>
</feature>
<feature type="modified residue" description="Phosphoserine" evidence="4">
    <location>
        <position position="418"/>
    </location>
</feature>
<feature type="modified residue" description="Phosphoserine" evidence="4">
    <location>
        <position position="467"/>
    </location>
</feature>
<feature type="modified residue" description="Phosphoserine" evidence="4">
    <location>
        <position position="483"/>
    </location>
</feature>
<feature type="modified residue" description="Phosphoserine" evidence="2">
    <location>
        <position position="511"/>
    </location>
</feature>
<feature type="modified residue" description="Phosphoserine" evidence="2">
    <location>
        <position position="545"/>
    </location>
</feature>
<feature type="modified residue" description="Phosphoserine" evidence="2">
    <location>
        <position position="553"/>
    </location>
</feature>
<feature type="modified residue" description="Phosphoserine" evidence="3">
    <location>
        <position position="558"/>
    </location>
</feature>
<feature type="modified residue" description="Phosphoserine" evidence="2">
    <location>
        <position position="559"/>
    </location>
</feature>
<feature type="modified residue" description="Phosphothreonine" evidence="3">
    <location>
        <position position="571"/>
    </location>
</feature>
<feature type="modified residue" description="Phosphoserine" evidence="2">
    <location>
        <position position="641"/>
    </location>
</feature>
<feature type="modified residue" description="Phosphoserine" evidence="2">
    <location>
        <position position="646"/>
    </location>
</feature>
<feature type="modified residue" description="Phosphoserine" evidence="3">
    <location>
        <position position="680"/>
    </location>
</feature>
<feature type="modified residue" description="Phosphoserine" evidence="2">
    <location>
        <position position="685"/>
    </location>
</feature>
<feature type="modified residue" description="Phosphoserine" evidence="2">
    <location>
        <position position="736"/>
    </location>
</feature>
<feature type="modified residue" description="Phosphoserine" evidence="3">
    <location>
        <position position="783"/>
    </location>
</feature>
<feature type="modified residue" description="Phosphoserine" evidence="4">
    <location>
        <position position="821"/>
    </location>
</feature>
<feature type="modified residue" description="Phosphoserine" evidence="15">
    <location>
        <position position="837"/>
    </location>
</feature>
<feature type="glycosylation site" description="O-linked (GlcNAc) threonine" evidence="1">
    <location>
        <position position="47"/>
    </location>
</feature>
<feature type="glycosylation site" description="O-linked (GlcNAc) threonine" evidence="1">
    <location>
        <position position="431"/>
    </location>
</feature>
<feature type="splice variant" id="VSP_046306" description="In isoform 2." evidence="12">
    <location>
        <begin position="1"/>
        <end position="376"/>
    </location>
</feature>
<feature type="sequence variant" id="VAR_060732" description="In dbSNP:rs196864." evidence="7 8 9 10 11 14">
    <original>P</original>
    <variation>T</variation>
    <location>
        <position position="439"/>
    </location>
</feature>
<feature type="sequence variant" id="VAR_056024" description="In dbSNP:rs196863.">
    <original>P</original>
    <variation>Q</variation>
    <location>
        <position position="725"/>
    </location>
</feature>
<feature type="sequence conflict" description="In Ref. 1; CAA68276." evidence="13" ref="1">
    <original>V</original>
    <variation>A</variation>
    <location>
        <position position="482"/>
    </location>
</feature>
<gene>
    <name type="primary">NEFM</name>
    <name type="synonym">NEF3</name>
    <name type="synonym">NFM</name>
</gene>
<comment type="function">
    <text evidence="3">Neurofilaments usually contain three intermediate filament proteins: NEFL, NEFM, and NEFH which are involved in the maintenance of neuronal caliber. May additionally cooperate with the neuronal intermediate filament proteins PRPH and INA to form neuronal filamentous networks (By similarity).</text>
</comment>
<comment type="subunit">
    <text evidence="4">Forms heterodimers with NEFL; which can further hetero-oligomerize (in vitro) (By similarity). Forms heterodimers with INA (in vitro) (By similarity).</text>
</comment>
<comment type="interaction">
    <interactant intactId="EBI-1105035">
        <id>P07197</id>
    </interactant>
    <interactant intactId="EBI-852823">
        <id>P05412</id>
        <label>JUN</label>
    </interactant>
    <organismsDiffer>false</organismsDiffer>
    <experiments>2</experiments>
</comment>
<comment type="interaction">
    <interactant intactId="EBI-1105035">
        <id>P07197</id>
    </interactant>
    <interactant intactId="EBI-475646">
        <id>P07196</id>
        <label>NEFL</label>
    </interactant>
    <organismsDiffer>false</organismsDiffer>
    <experiments>6</experiments>
</comment>
<comment type="interaction">
    <interactant intactId="EBI-1105035">
        <id>P07197</id>
    </interactant>
    <interactant intactId="EBI-491274">
        <id>P06400</id>
        <label>RB1</label>
    </interactant>
    <organismsDiffer>false</organismsDiffer>
    <experiments>2</experiments>
</comment>
<comment type="interaction">
    <interactant intactId="EBI-1105035">
        <id>P07197</id>
    </interactant>
    <interactant intactId="EBI-1040141">
        <id>Q15796</id>
        <label>SMAD2</label>
    </interactant>
    <organismsDiffer>false</organismsDiffer>
    <experiments>3</experiments>
</comment>
<comment type="interaction">
    <interactant intactId="EBI-1105035">
        <id>P07197</id>
    </interactant>
    <interactant intactId="EBI-353844">
        <id>P08670</id>
        <label>VIM</label>
    </interactant>
    <organismsDiffer>false</organismsDiffer>
    <experiments>8</experiments>
</comment>
<comment type="subcellular location">
    <subcellularLocation>
        <location evidence="3">Cytoplasm</location>
        <location evidence="3">Cytoskeleton</location>
    </subcellularLocation>
    <subcellularLocation>
        <location evidence="3">Cell projection</location>
        <location evidence="3">Axon</location>
    </subcellularLocation>
</comment>
<comment type="alternative products">
    <event type="alternative splicing"/>
    <isoform>
        <id>P07197-1</id>
        <name>1</name>
        <sequence type="displayed"/>
    </isoform>
    <isoform>
        <id>P07197-2</id>
        <name>2</name>
        <sequence type="described" ref="VSP_046306"/>
    </isoform>
</comment>
<comment type="PTM">
    <text>There are a number of repeats of the tripeptide K-S-P, NFM is phosphorylated on a number of the serines in this motif. It is thought that phosphorylation of NFM results in the formation of interfilament cross bridges that are important in the maintenance of axonal caliber.</text>
</comment>
<comment type="PTM">
    <text>Phosphorylation seems to play a major role in the functioning of the larger neurofilament polypeptides (NF-M and NF-H), the levels of phosphorylation being altered developmentally and coincidentally with a change in the neurofilament function.</text>
</comment>
<comment type="PTM">
    <text>Phosphorylated in the head and rod regions by the PKC kinase PKN1, leading to the inhibition of polymerization.</text>
</comment>
<comment type="similarity">
    <text evidence="5">Belongs to the intermediate filament family.</text>
</comment>
<proteinExistence type="evidence at protein level"/>